<name>LQY1_ARATH</name>
<dbReference type="EC" id="5.3.4.1"/>
<dbReference type="EMBL" id="AC006434">
    <property type="protein sequence ID" value="AAF87111.1"/>
    <property type="status" value="ALT_SEQ"/>
    <property type="molecule type" value="Genomic_DNA"/>
</dbReference>
<dbReference type="EMBL" id="CP002684">
    <property type="protein sequence ID" value="AEE35746.1"/>
    <property type="molecule type" value="Genomic_DNA"/>
</dbReference>
<dbReference type="EMBL" id="BT002378">
    <property type="protein sequence ID" value="AAO00738.1"/>
    <property type="molecule type" value="mRNA"/>
</dbReference>
<dbReference type="EMBL" id="BT006547">
    <property type="protein sequence ID" value="AAP21355.1"/>
    <property type="molecule type" value="mRNA"/>
</dbReference>
<dbReference type="EMBL" id="AK117868">
    <property type="protein sequence ID" value="BAC42509.1"/>
    <property type="molecule type" value="mRNA"/>
</dbReference>
<dbReference type="RefSeq" id="NP_177698.1">
    <property type="nucleotide sequence ID" value="NM_106220.4"/>
</dbReference>
<dbReference type="BioGRID" id="29122">
    <property type="interactions" value="2"/>
</dbReference>
<dbReference type="FunCoup" id="Q8GSJ6">
    <property type="interactions" value="1202"/>
</dbReference>
<dbReference type="IntAct" id="Q8GSJ6">
    <property type="interactions" value="1"/>
</dbReference>
<dbReference type="STRING" id="3702.Q8GSJ6"/>
<dbReference type="PaxDb" id="3702-AT1G75690.1"/>
<dbReference type="ProteomicsDB" id="238799"/>
<dbReference type="EnsemblPlants" id="AT1G75690.1">
    <property type="protein sequence ID" value="AT1G75690.1"/>
    <property type="gene ID" value="AT1G75690"/>
</dbReference>
<dbReference type="GeneID" id="843903"/>
<dbReference type="Gramene" id="AT1G75690.1">
    <property type="protein sequence ID" value="AT1G75690.1"/>
    <property type="gene ID" value="AT1G75690"/>
</dbReference>
<dbReference type="KEGG" id="ath:AT1G75690"/>
<dbReference type="Araport" id="AT1G75690"/>
<dbReference type="TAIR" id="AT1G75690">
    <property type="gene designation" value="LQY1"/>
</dbReference>
<dbReference type="eggNOG" id="ENOG502RY5W">
    <property type="taxonomic scope" value="Eukaryota"/>
</dbReference>
<dbReference type="HOGENOM" id="CLU_118793_0_0_1"/>
<dbReference type="InParanoid" id="Q8GSJ6"/>
<dbReference type="OMA" id="RENTRPC"/>
<dbReference type="PhylomeDB" id="Q8GSJ6"/>
<dbReference type="PRO" id="PR:Q8GSJ6"/>
<dbReference type="Proteomes" id="UP000006548">
    <property type="component" value="Chromosome 1"/>
</dbReference>
<dbReference type="ExpressionAtlas" id="Q8GSJ6">
    <property type="expression patterns" value="baseline and differential"/>
</dbReference>
<dbReference type="GO" id="GO:0009507">
    <property type="term" value="C:chloroplast"/>
    <property type="evidence" value="ECO:0007005"/>
    <property type="project" value="TAIR"/>
</dbReference>
<dbReference type="GO" id="GO:0009570">
    <property type="term" value="C:chloroplast stroma"/>
    <property type="evidence" value="ECO:0007005"/>
    <property type="project" value="TAIR"/>
</dbReference>
<dbReference type="GO" id="GO:0009534">
    <property type="term" value="C:chloroplast thylakoid"/>
    <property type="evidence" value="ECO:0000314"/>
    <property type="project" value="TAIR"/>
</dbReference>
<dbReference type="GO" id="GO:0009535">
    <property type="term" value="C:chloroplast thylakoid membrane"/>
    <property type="evidence" value="ECO:0007005"/>
    <property type="project" value="TAIR"/>
</dbReference>
<dbReference type="GO" id="GO:0005739">
    <property type="term" value="C:mitochondrion"/>
    <property type="evidence" value="ECO:0007005"/>
    <property type="project" value="TAIR"/>
</dbReference>
<dbReference type="GO" id="GO:0003756">
    <property type="term" value="F:protein disulfide isomerase activity"/>
    <property type="evidence" value="ECO:0000314"/>
    <property type="project" value="TAIR"/>
</dbReference>
<dbReference type="GO" id="GO:0008270">
    <property type="term" value="F:zinc ion binding"/>
    <property type="evidence" value="ECO:0007669"/>
    <property type="project" value="UniProtKB-KW"/>
</dbReference>
<dbReference type="GO" id="GO:0010206">
    <property type="term" value="P:photosystem II repair"/>
    <property type="evidence" value="ECO:0000315"/>
    <property type="project" value="TAIR"/>
</dbReference>
<dbReference type="InterPro" id="IPR035272">
    <property type="entry name" value="DUF5351"/>
</dbReference>
<dbReference type="InterPro" id="IPR036410">
    <property type="entry name" value="HSP_DnaJ_Cys-rich_dom_sf"/>
</dbReference>
<dbReference type="PANTHER" id="PTHR15852">
    <property type="entry name" value="PLASTID TRANSCRIPTIONALLY ACTIVE PROTEIN"/>
    <property type="match status" value="1"/>
</dbReference>
<dbReference type="PANTHER" id="PTHR15852:SF27">
    <property type="entry name" value="PROTEIN DISULFIDE-ISOMERASE LQY1, CHLOROPLASTIC"/>
    <property type="match status" value="1"/>
</dbReference>
<dbReference type="Pfam" id="PF17302">
    <property type="entry name" value="DUF5351"/>
    <property type="match status" value="1"/>
</dbReference>
<dbReference type="SUPFAM" id="SSF57938">
    <property type="entry name" value="DnaJ/Hsp40 cysteine-rich domain"/>
    <property type="match status" value="1"/>
</dbReference>
<comment type="function">
    <text evidence="4 5">Protein disulfide-isomerase probably involved upon formation of a complex with HHL1 in maintaining photosystem II (PSII) activity under high light by regulating repair and reassembly of PSII complexes.</text>
</comment>
<comment type="catalytic activity">
    <reaction evidence="4">
        <text>Catalyzes the rearrangement of -S-S- bonds in proteins.</text>
        <dbReference type="EC" id="5.3.4.1"/>
    </reaction>
</comment>
<comment type="cofactor">
    <cofactor evidence="4">
        <name>Zn(2+)</name>
        <dbReference type="ChEBI" id="CHEBI:29105"/>
    </cofactor>
    <text evidence="4">Binds 2 Zn(2+) ions per monomer.</text>
</comment>
<comment type="subunit">
    <text evidence="4 5">Interacts with the photosystem II core subunits (PubMed:21586683). Interacts with HHL1 (PubMed:24632535).</text>
</comment>
<comment type="subcellular location">
    <subcellularLocation>
        <location>Plastid</location>
        <location>Chloroplast thylakoid membrane</location>
        <topology>Single-pass membrane protein</topology>
    </subcellularLocation>
    <text>More abundant in stroma-exposed thylakoids.</text>
</comment>
<comment type="induction">
    <text evidence="4">Not induced by high-light treatment.</text>
</comment>
<comment type="domain">
    <text evidence="8">Its sequence is related to the DnaJ family but lacks the J domain. The CR-type-like region is similar to CR-type zinc-fingers and was shown to bind zinc (PubMed:21586683).</text>
</comment>
<comment type="disruption phenotype">
    <text evidence="4">Lower maximum photochemical efficiency of photosystem II after high-light treatment.</text>
</comment>
<comment type="similarity">
    <text evidence="7">Belongs to the BSD2 chaperone family.</text>
</comment>
<comment type="sequence caution" evidence="7">
    <conflict type="erroneous gene model prediction">
        <sequence resource="EMBL-CDS" id="AAF87111"/>
    </conflict>
</comment>
<protein>
    <recommendedName>
        <fullName evidence="6">Protein disulfide-isomerase LQY1, chloroplastic</fullName>
        <ecNumber>5.3.4.1</ecNumber>
    </recommendedName>
    <alternativeName>
        <fullName evidence="6">Protein LOW QUANTUM YIELD OF PHOTOSYSTEM II 1</fullName>
    </alternativeName>
</protein>
<proteinExistence type="evidence at protein level"/>
<organism>
    <name type="scientific">Arabidopsis thaliana</name>
    <name type="common">Mouse-ear cress</name>
    <dbReference type="NCBI Taxonomy" id="3702"/>
    <lineage>
        <taxon>Eukaryota</taxon>
        <taxon>Viridiplantae</taxon>
        <taxon>Streptophyta</taxon>
        <taxon>Embryophyta</taxon>
        <taxon>Tracheophyta</taxon>
        <taxon>Spermatophyta</taxon>
        <taxon>Magnoliopsida</taxon>
        <taxon>eudicotyledons</taxon>
        <taxon>Gunneridae</taxon>
        <taxon>Pentapetalae</taxon>
        <taxon>rosids</taxon>
        <taxon>malvids</taxon>
        <taxon>Brassicales</taxon>
        <taxon>Brassicaceae</taxon>
        <taxon>Camelineae</taxon>
        <taxon>Arabidopsis</taxon>
    </lineage>
</organism>
<gene>
    <name evidence="6" type="primary">LQY1</name>
    <name evidence="9" type="ordered locus">At1g75690</name>
    <name type="ORF">F10A5.12</name>
    <name evidence="10" type="ORF">F10A5.4</name>
</gene>
<keyword id="KW-0150">Chloroplast</keyword>
<keyword id="KW-0413">Isomerase</keyword>
<keyword id="KW-0472">Membrane</keyword>
<keyword id="KW-0479">Metal-binding</keyword>
<keyword id="KW-0934">Plastid</keyword>
<keyword id="KW-1185">Reference proteome</keyword>
<keyword id="KW-0677">Repeat</keyword>
<keyword id="KW-0793">Thylakoid</keyword>
<keyword id="KW-0809">Transit peptide</keyword>
<keyword id="KW-0812">Transmembrane</keyword>
<keyword id="KW-1133">Transmembrane helix</keyword>
<keyword id="KW-0862">Zinc</keyword>
<keyword id="KW-0863">Zinc-finger</keyword>
<accession>Q8GSJ6</accession>
<accession>Q9LR08</accession>
<sequence>MPVSAPSPPRLHSPFIHCPINFTPSSFSARNLRSPSTSYPRIKAELDPNTVVAISVGVASVALGIGIPVFYETQIDNAAKRENTQPCFPCNGTGAQKCRLCVGSGNVTVELGGGEKEVSNCINCDGAGSLTCTTCQGSGVQPRYLDRREFKDDD</sequence>
<reference key="1">
    <citation type="journal article" date="2000" name="Nature">
        <title>Sequence and analysis of chromosome 1 of the plant Arabidopsis thaliana.</title>
        <authorList>
            <person name="Theologis A."/>
            <person name="Ecker J.R."/>
            <person name="Palm C.J."/>
            <person name="Federspiel N.A."/>
            <person name="Kaul S."/>
            <person name="White O."/>
            <person name="Alonso J."/>
            <person name="Altafi H."/>
            <person name="Araujo R."/>
            <person name="Bowman C.L."/>
            <person name="Brooks S.Y."/>
            <person name="Buehler E."/>
            <person name="Chan A."/>
            <person name="Chao Q."/>
            <person name="Chen H."/>
            <person name="Cheuk R.F."/>
            <person name="Chin C.W."/>
            <person name="Chung M.K."/>
            <person name="Conn L."/>
            <person name="Conway A.B."/>
            <person name="Conway A.R."/>
            <person name="Creasy T.H."/>
            <person name="Dewar K."/>
            <person name="Dunn P."/>
            <person name="Etgu P."/>
            <person name="Feldblyum T.V."/>
            <person name="Feng J.-D."/>
            <person name="Fong B."/>
            <person name="Fujii C.Y."/>
            <person name="Gill J.E."/>
            <person name="Goldsmith A.D."/>
            <person name="Haas B."/>
            <person name="Hansen N.F."/>
            <person name="Hughes B."/>
            <person name="Huizar L."/>
            <person name="Hunter J.L."/>
            <person name="Jenkins J."/>
            <person name="Johnson-Hopson C."/>
            <person name="Khan S."/>
            <person name="Khaykin E."/>
            <person name="Kim C.J."/>
            <person name="Koo H.L."/>
            <person name="Kremenetskaia I."/>
            <person name="Kurtz D.B."/>
            <person name="Kwan A."/>
            <person name="Lam B."/>
            <person name="Langin-Hooper S."/>
            <person name="Lee A."/>
            <person name="Lee J.M."/>
            <person name="Lenz C.A."/>
            <person name="Li J.H."/>
            <person name="Li Y.-P."/>
            <person name="Lin X."/>
            <person name="Liu S.X."/>
            <person name="Liu Z.A."/>
            <person name="Luros J.S."/>
            <person name="Maiti R."/>
            <person name="Marziali A."/>
            <person name="Militscher J."/>
            <person name="Miranda M."/>
            <person name="Nguyen M."/>
            <person name="Nierman W.C."/>
            <person name="Osborne B.I."/>
            <person name="Pai G."/>
            <person name="Peterson J."/>
            <person name="Pham P.K."/>
            <person name="Rizzo M."/>
            <person name="Rooney T."/>
            <person name="Rowley D."/>
            <person name="Sakano H."/>
            <person name="Salzberg S.L."/>
            <person name="Schwartz J.R."/>
            <person name="Shinn P."/>
            <person name="Southwick A.M."/>
            <person name="Sun H."/>
            <person name="Tallon L.J."/>
            <person name="Tambunga G."/>
            <person name="Toriumi M.J."/>
            <person name="Town C.D."/>
            <person name="Utterback T."/>
            <person name="Van Aken S."/>
            <person name="Vaysberg M."/>
            <person name="Vysotskaia V.S."/>
            <person name="Walker M."/>
            <person name="Wu D."/>
            <person name="Yu G."/>
            <person name="Fraser C.M."/>
            <person name="Venter J.C."/>
            <person name="Davis R.W."/>
        </authorList>
    </citation>
    <scope>NUCLEOTIDE SEQUENCE [LARGE SCALE GENOMIC DNA]</scope>
    <source>
        <strain>cv. Columbia</strain>
    </source>
</reference>
<reference key="2">
    <citation type="journal article" date="2017" name="Plant J.">
        <title>Araport11: a complete reannotation of the Arabidopsis thaliana reference genome.</title>
        <authorList>
            <person name="Cheng C.Y."/>
            <person name="Krishnakumar V."/>
            <person name="Chan A.P."/>
            <person name="Thibaud-Nissen F."/>
            <person name="Schobel S."/>
            <person name="Town C.D."/>
        </authorList>
    </citation>
    <scope>GENOME REANNOTATION</scope>
    <source>
        <strain>cv. Columbia</strain>
    </source>
</reference>
<reference key="3">
    <citation type="journal article" date="2002" name="Science">
        <title>Functional annotation of a full-length Arabidopsis cDNA collection.</title>
        <authorList>
            <person name="Seki M."/>
            <person name="Narusaka M."/>
            <person name="Kamiya A."/>
            <person name="Ishida J."/>
            <person name="Satou M."/>
            <person name="Sakurai T."/>
            <person name="Nakajima M."/>
            <person name="Enju A."/>
            <person name="Akiyama K."/>
            <person name="Oono Y."/>
            <person name="Muramatsu M."/>
            <person name="Hayashizaki Y."/>
            <person name="Kawai J."/>
            <person name="Carninci P."/>
            <person name="Itoh M."/>
            <person name="Ishii Y."/>
            <person name="Arakawa T."/>
            <person name="Shibata K."/>
            <person name="Shinagawa A."/>
            <person name="Shinozaki K."/>
        </authorList>
    </citation>
    <scope>NUCLEOTIDE SEQUENCE [LARGE SCALE MRNA]</scope>
    <source>
        <strain>cv. Columbia</strain>
    </source>
</reference>
<reference key="4">
    <citation type="journal article" date="2003" name="Science">
        <title>Empirical analysis of transcriptional activity in the Arabidopsis genome.</title>
        <authorList>
            <person name="Yamada K."/>
            <person name="Lim J."/>
            <person name="Dale J.M."/>
            <person name="Chen H."/>
            <person name="Shinn P."/>
            <person name="Palm C.J."/>
            <person name="Southwick A.M."/>
            <person name="Wu H.C."/>
            <person name="Kim C.J."/>
            <person name="Nguyen M."/>
            <person name="Pham P.K."/>
            <person name="Cheuk R.F."/>
            <person name="Karlin-Newmann G."/>
            <person name="Liu S.X."/>
            <person name="Lam B."/>
            <person name="Sakano H."/>
            <person name="Wu T."/>
            <person name="Yu G."/>
            <person name="Miranda M."/>
            <person name="Quach H.L."/>
            <person name="Tripp M."/>
            <person name="Chang C.H."/>
            <person name="Lee J.M."/>
            <person name="Toriumi M.J."/>
            <person name="Chan M.M."/>
            <person name="Tang C.C."/>
            <person name="Onodera C.S."/>
            <person name="Deng J.M."/>
            <person name="Akiyama K."/>
            <person name="Ansari Y."/>
            <person name="Arakawa T."/>
            <person name="Banh J."/>
            <person name="Banno F."/>
            <person name="Bowser L."/>
            <person name="Brooks S.Y."/>
            <person name="Carninci P."/>
            <person name="Chao Q."/>
            <person name="Choy N."/>
            <person name="Enju A."/>
            <person name="Goldsmith A.D."/>
            <person name="Gurjal M."/>
            <person name="Hansen N.F."/>
            <person name="Hayashizaki Y."/>
            <person name="Johnson-Hopson C."/>
            <person name="Hsuan V.W."/>
            <person name="Iida K."/>
            <person name="Karnes M."/>
            <person name="Khan S."/>
            <person name="Koesema E."/>
            <person name="Ishida J."/>
            <person name="Jiang P.X."/>
            <person name="Jones T."/>
            <person name="Kawai J."/>
            <person name="Kamiya A."/>
            <person name="Meyers C."/>
            <person name="Nakajima M."/>
            <person name="Narusaka M."/>
            <person name="Seki M."/>
            <person name="Sakurai T."/>
            <person name="Satou M."/>
            <person name="Tamse R."/>
            <person name="Vaysberg M."/>
            <person name="Wallender E.K."/>
            <person name="Wong C."/>
            <person name="Yamamura Y."/>
            <person name="Yuan S."/>
            <person name="Shinozaki K."/>
            <person name="Davis R.W."/>
            <person name="Theologis A."/>
            <person name="Ecker J.R."/>
        </authorList>
    </citation>
    <scope>NUCLEOTIDE SEQUENCE [LARGE SCALE MRNA]</scope>
    <source>
        <strain>cv. Columbia</strain>
    </source>
</reference>
<reference key="5">
    <citation type="journal article" date="2011" name="Plant Cell">
        <title>A small zinc finger thylakoid protein plays a role in maintenance of photosystem II in Arabidopsis thaliana.</title>
        <authorList>
            <person name="Lu Y."/>
            <person name="Hall D.A."/>
            <person name="Last R.L."/>
        </authorList>
    </citation>
    <scope>FUNCTION</scope>
    <scope>CATALYTIC ACTIVITY</scope>
    <scope>COFACTOR</scope>
    <scope>DISRUPTION PHENOTYPE</scope>
    <scope>INDUCTION BY LIGHT</scope>
    <scope>INTERACTION WITH PHOTOSYSTEM II</scope>
    <source>
        <strain>cv. Columbia</strain>
    </source>
</reference>
<reference key="6">
    <citation type="journal article" date="2014" name="Plant Cell">
        <title>HYPERSENSITIVE TO HIGH LIGHT1 interacts with LOW QUANTUM YIELD OF PHOTOSYSTEM II1 and functions in protection of photosystem II from photodamage in Arabidopsis.</title>
        <authorList>
            <person name="Jin H."/>
            <person name="Liu B."/>
            <person name="Luo L."/>
            <person name="Feng D."/>
            <person name="Wang P."/>
            <person name="Liu J."/>
            <person name="Da Q."/>
            <person name="He Y."/>
            <person name="Qi K."/>
            <person name="Wang J."/>
            <person name="Wang H.B."/>
        </authorList>
    </citation>
    <scope>INTERACTION WITH HHL1</scope>
    <scope>FUNCTION</scope>
</reference>
<evidence type="ECO:0000250" key="1">
    <source>
        <dbReference type="UniProtKB" id="Q9SN73"/>
    </source>
</evidence>
<evidence type="ECO:0000255" key="2"/>
<evidence type="ECO:0000255" key="3">
    <source>
        <dbReference type="PROSITE-ProRule" id="PRU00546"/>
    </source>
</evidence>
<evidence type="ECO:0000269" key="4">
    <source>
    </source>
</evidence>
<evidence type="ECO:0000269" key="5">
    <source>
    </source>
</evidence>
<evidence type="ECO:0000303" key="6">
    <source>
    </source>
</evidence>
<evidence type="ECO:0000305" key="7"/>
<evidence type="ECO:0000305" key="8">
    <source>
    </source>
</evidence>
<evidence type="ECO:0000312" key="9">
    <source>
        <dbReference type="Araport" id="AT1G75690"/>
    </source>
</evidence>
<evidence type="ECO:0000312" key="10">
    <source>
        <dbReference type="EMBL" id="AAF87111.1"/>
    </source>
</evidence>
<feature type="transit peptide" description="Chloroplast" evidence="2">
    <location>
        <begin position="1"/>
        <end position="43"/>
    </location>
</feature>
<feature type="chain" id="PRO_0000415338" description="Protein disulfide-isomerase LQY1, chloroplastic">
    <location>
        <begin position="44"/>
        <end position="154"/>
    </location>
</feature>
<feature type="transmembrane region" description="Helical" evidence="2">
    <location>
        <begin position="51"/>
        <end position="71"/>
    </location>
</feature>
<feature type="zinc finger region" description="CR-type" evidence="3">
    <location>
        <begin position="77"/>
        <end position="147"/>
    </location>
</feature>
<feature type="binding site" evidence="1">
    <location>
        <position position="87"/>
    </location>
    <ligand>
        <name>Zn(2+)</name>
        <dbReference type="ChEBI" id="CHEBI:29105"/>
        <label>1</label>
    </ligand>
</feature>
<feature type="binding site" evidence="1">
    <location>
        <position position="90"/>
    </location>
    <ligand>
        <name>Zn(2+)</name>
        <dbReference type="ChEBI" id="CHEBI:29105"/>
        <label>1</label>
    </ligand>
</feature>
<feature type="binding site" evidence="1">
    <location>
        <position position="98"/>
    </location>
    <ligand>
        <name>Zn(2+)</name>
        <dbReference type="ChEBI" id="CHEBI:29105"/>
        <label>2</label>
    </ligand>
</feature>
<feature type="binding site" evidence="1">
    <location>
        <position position="101"/>
    </location>
    <ligand>
        <name>Zn(2+)</name>
        <dbReference type="ChEBI" id="CHEBI:29105"/>
        <label>2</label>
    </ligand>
</feature>
<feature type="binding site" evidence="1">
    <location>
        <position position="121"/>
    </location>
    <ligand>
        <name>Zn(2+)</name>
        <dbReference type="ChEBI" id="CHEBI:29105"/>
        <label>2</label>
    </ligand>
</feature>
<feature type="binding site" evidence="1">
    <location>
        <position position="124"/>
    </location>
    <ligand>
        <name>Zn(2+)</name>
        <dbReference type="ChEBI" id="CHEBI:29105"/>
        <label>2</label>
    </ligand>
</feature>
<feature type="binding site" evidence="1">
    <location>
        <position position="132"/>
    </location>
    <ligand>
        <name>Zn(2+)</name>
        <dbReference type="ChEBI" id="CHEBI:29105"/>
        <label>1</label>
    </ligand>
</feature>
<feature type="binding site" evidence="1">
    <location>
        <position position="135"/>
    </location>
    <ligand>
        <name>Zn(2+)</name>
        <dbReference type="ChEBI" id="CHEBI:29105"/>
        <label>1</label>
    </ligand>
</feature>